<name>FLAH_SULAC</name>
<organism>
    <name type="scientific">Sulfolobus acidocaldarius (strain ATCC 33909 / DSM 639 / JCM 8929 / NBRC 15157 / NCIMB 11770)</name>
    <dbReference type="NCBI Taxonomy" id="330779"/>
    <lineage>
        <taxon>Archaea</taxon>
        <taxon>Thermoproteota</taxon>
        <taxon>Thermoprotei</taxon>
        <taxon>Sulfolobales</taxon>
        <taxon>Sulfolobaceae</taxon>
        <taxon>Sulfolobus</taxon>
    </lineage>
</organism>
<gene>
    <name evidence="5" type="primary">flaH</name>
    <name evidence="8" type="ordered locus">Saci_1174</name>
</gene>
<comment type="function">
    <text evidence="1 2 3">Component of the archaellum (PubMed:22081969, PubMed:24103130, PubMed:26508112). FlaX, FlaH and FlaI form the core cytoplasmic motor complex of the crenarchaeal archaellum (PubMed:24103130, PubMed:26508112). FlaH binds ATP with high affinity but lacks detectable in vitro ATPase activity (PubMed:26508112). ATP binding is essential for interaction with FlaI and for archaellum assembly (PubMed:26508112).</text>
</comment>
<comment type="subunit">
    <text evidence="1 2 3 4">The S.acidocaldarius archaellum assembly machinery and its filament consist of seven proteins (FlaB, FlaF, FlaG, FlaH, FlaI, FlaJ and FlaX) (PubMed:22081969). Interacts directly with the FlaX ring and the motor ATPase FlaI (PubMed:24103130, PubMed:26508112, PubMed:29605923). Monomers, which can probably form homohexamers upon binding to ATP (PubMed:26508112). In vitro, FlaH assembles as a second ring inside the FlaX ring (PubMed:26508112).</text>
</comment>
<comment type="subcellular location">
    <subcellularLocation>
        <location evidence="2">Archaeal flagellum</location>
    </subcellularLocation>
    <subcellularLocation>
        <location evidence="7">Cytoplasm</location>
    </subcellularLocation>
</comment>
<comment type="induction">
    <text evidence="1">Part of the fla operon, which encodes the seven fla genes essential for crenarchaeal flagellum assembly and function (PubMed:22081969). Expression is induced by tryptone starvation (PubMed:22081969).</text>
</comment>
<comment type="disruption phenotype">
    <text evidence="1">The deletion mutant lacks flagella and is non-motile.</text>
</comment>
<comment type="similarity">
    <text evidence="6">Belongs to the FlaH family.</text>
</comment>
<reference key="1">
    <citation type="journal article" date="2005" name="J. Bacteriol.">
        <title>The genome of Sulfolobus acidocaldarius, a model organism of the Crenarchaeota.</title>
        <authorList>
            <person name="Chen L."/>
            <person name="Bruegger K."/>
            <person name="Skovgaard M."/>
            <person name="Redder P."/>
            <person name="She Q."/>
            <person name="Torarinsson E."/>
            <person name="Greve B."/>
            <person name="Awayez M."/>
            <person name="Zibat A."/>
            <person name="Klenk H.-P."/>
            <person name="Garrett R.A."/>
        </authorList>
    </citation>
    <scope>NUCLEOTIDE SEQUENCE [LARGE SCALE GENOMIC DNA]</scope>
    <source>
        <strain>ATCC 33909 / DSM 639 / JCM 8929 / NBRC 15157 / NCIMB 11770</strain>
    </source>
</reference>
<reference key="2">
    <citation type="journal article" date="2012" name="Mol. Microbiol.">
        <title>Molecular analysis of the crenarchaeal flagellum.</title>
        <authorList>
            <person name="Lassak K."/>
            <person name="Neiner T."/>
            <person name="Ghosh A."/>
            <person name="Klingl A."/>
            <person name="Wirth R."/>
            <person name="Albers S.V."/>
        </authorList>
    </citation>
    <scope>FUNCTION</scope>
    <scope>SUBUNIT</scope>
    <scope>INDUCTION</scope>
    <scope>DISRUPTION PHENOTYPE</scope>
    <source>
        <strain>ATCC 33909 / DSM 639 / JCM 8929 / NBRC 15157 / NCIMB 11770</strain>
    </source>
</reference>
<reference key="3">
    <citation type="journal article" date="2013" name="FEBS J.">
        <title>Insights into subunit interactions in the Sulfolobus acidocaldarius archaellum cytoplasmic complex.</title>
        <authorList>
            <person name="Banerjee A."/>
            <person name="Neiner T."/>
            <person name="Tripp P."/>
            <person name="Albers S.V."/>
        </authorList>
    </citation>
    <scope>FUNCTION</scope>
    <scope>SUBUNIT</scope>
    <scope>INTERACTION WITH FLAX AND FLAI</scope>
    <scope>SUBCELLULAR LOCATION</scope>
</reference>
<reference key="4">
    <citation type="journal article" date="2018" name="Methods Mol. Biol.">
        <title>Expression, Purification, and Assembly of Archaellum Subcomplexes of Sulfolobus acidocaldarius.</title>
        <authorList>
            <person name="Chaudhury P."/>
            <person name="Tripp P."/>
            <person name="Albers S.V."/>
        </authorList>
    </citation>
    <scope>INTERACTION WITH FLAX</scope>
</reference>
<reference evidence="9" key="5">
    <citation type="journal article" date="2016" name="Mol. Microbiol.">
        <title>The nucleotide-dependent interaction of FlaH and FlaI is essential for assembly and function of the archaellum motor.</title>
        <authorList>
            <person name="Chaudhury P."/>
            <person name="Neiner T."/>
            <person name="D'Imprima E."/>
            <person name="Banerjee A."/>
            <person name="Reindl S."/>
            <person name="Ghosh A."/>
            <person name="Arvai A.S."/>
            <person name="Mills D.J."/>
            <person name="van der Does C."/>
            <person name="Tainer J.A."/>
            <person name="Vonck J."/>
            <person name="Albers S.V."/>
        </authorList>
    </citation>
    <scope>X-RAY CRYSTALLOGRAPHY (2.30 ANGSTROMS) IN COMPLEX WITH ATP AND MG(2+)</scope>
    <scope>FUNCTION</scope>
    <scope>SUBUNIT</scope>
    <scope>INTERACTION WITH FLAX AND FLAI</scope>
    <scope>MUTAGENESIS OF LYS-33 AND ASP-122</scope>
    <source>
        <strain>ATCC 33909 / DSM 639 / JCM 8929 / NBRC 15157 / NCIMB 11770</strain>
    </source>
</reference>
<feature type="chain" id="PRO_0000460733" description="Archaeal flagellar ATP-binding protein FlaH">
    <location>
        <begin position="1"/>
        <end position="228"/>
    </location>
</feature>
<feature type="binding site" evidence="3 9">
    <location>
        <position position="30"/>
    </location>
    <ligand>
        <name>ATP</name>
        <dbReference type="ChEBI" id="CHEBI:30616"/>
    </ligand>
</feature>
<feature type="binding site" evidence="3 9">
    <location>
        <position position="31"/>
    </location>
    <ligand>
        <name>ATP</name>
        <dbReference type="ChEBI" id="CHEBI:30616"/>
    </ligand>
</feature>
<feature type="binding site" evidence="3 9">
    <location>
        <position position="33"/>
    </location>
    <ligand>
        <name>ATP</name>
        <dbReference type="ChEBI" id="CHEBI:30616"/>
    </ligand>
</feature>
<feature type="binding site" evidence="3 9">
    <location>
        <position position="34"/>
    </location>
    <ligand>
        <name>ATP</name>
        <dbReference type="ChEBI" id="CHEBI:30616"/>
    </ligand>
</feature>
<feature type="binding site" evidence="3 9">
    <location>
        <position position="34"/>
    </location>
    <ligand>
        <name>Mg(2+)</name>
        <dbReference type="ChEBI" id="CHEBI:18420"/>
    </ligand>
</feature>
<feature type="binding site" evidence="3 9">
    <location>
        <position position="35"/>
    </location>
    <ligand>
        <name>ATP</name>
        <dbReference type="ChEBI" id="CHEBI:30616"/>
    </ligand>
</feature>
<feature type="binding site" evidence="3 9">
    <location>
        <position position="57"/>
    </location>
    <ligand>
        <name>ATP</name>
        <dbReference type="ChEBI" id="CHEBI:30616"/>
    </ligand>
</feature>
<feature type="binding site" evidence="3 9">
    <location>
        <position position="57"/>
    </location>
    <ligand>
        <name>Mg(2+)</name>
        <dbReference type="ChEBI" id="CHEBI:18420"/>
    </ligand>
</feature>
<feature type="binding site" evidence="3 9">
    <location>
        <position position="191"/>
    </location>
    <ligand>
        <name>ATP</name>
        <dbReference type="ChEBI" id="CHEBI:30616"/>
    </ligand>
</feature>
<feature type="mutagenesis site" description="Strongly reduces nucleotide binding. Cannot restore motility in a flaH deletion mutant." evidence="3">
    <original>K</original>
    <variation>A</variation>
    <location>
        <position position="33"/>
    </location>
</feature>
<feature type="mutagenesis site" description="Strongly reduces nucleotide binding. Cannot restore motility in a flaH deletion mutant." evidence="3">
    <original>D</original>
    <variation>N</variation>
    <location>
        <position position="122"/>
    </location>
</feature>
<feature type="helix" evidence="10">
    <location>
        <begin position="8"/>
        <end position="14"/>
    </location>
</feature>
<feature type="strand" evidence="10">
    <location>
        <begin position="16"/>
        <end position="20"/>
    </location>
</feature>
<feature type="strand" evidence="10">
    <location>
        <begin position="22"/>
        <end position="27"/>
    </location>
</feature>
<feature type="helix" evidence="10">
    <location>
        <begin position="33"/>
        <end position="46"/>
    </location>
</feature>
<feature type="strand" evidence="10">
    <location>
        <begin position="51"/>
        <end position="57"/>
    </location>
</feature>
<feature type="helix" evidence="10">
    <location>
        <begin position="60"/>
        <end position="69"/>
    </location>
</feature>
<feature type="helix" evidence="10">
    <location>
        <begin position="75"/>
        <end position="79"/>
    </location>
</feature>
<feature type="strand" evidence="10">
    <location>
        <begin position="82"/>
        <end position="87"/>
    </location>
</feature>
<feature type="strand" evidence="10">
    <location>
        <begin position="90"/>
        <end position="93"/>
    </location>
</feature>
<feature type="helix" evidence="10">
    <location>
        <begin position="97"/>
        <end position="112"/>
    </location>
</feature>
<feature type="strand" evidence="10">
    <location>
        <begin position="117"/>
        <end position="122"/>
    </location>
</feature>
<feature type="helix" evidence="10">
    <location>
        <begin position="125"/>
        <end position="130"/>
    </location>
</feature>
<feature type="helix" evidence="10">
    <location>
        <begin position="133"/>
        <end position="148"/>
    </location>
</feature>
<feature type="strand" evidence="10">
    <location>
        <begin position="152"/>
        <end position="157"/>
    </location>
</feature>
<feature type="helix" evidence="10">
    <location>
        <begin position="164"/>
        <end position="173"/>
    </location>
</feature>
<feature type="strand" evidence="10">
    <location>
        <begin position="174"/>
        <end position="197"/>
    </location>
</feature>
<feature type="strand" evidence="10">
    <location>
        <begin position="208"/>
        <end position="213"/>
    </location>
</feature>
<feature type="turn" evidence="10">
    <location>
        <begin position="214"/>
        <end position="216"/>
    </location>
</feature>
<feature type="strand" evidence="10">
    <location>
        <begin position="217"/>
        <end position="220"/>
    </location>
</feature>
<keyword id="KW-0002">3D-structure</keyword>
<keyword id="KW-0974">Archaeal flagellum</keyword>
<keyword id="KW-1209">Archaeal flagellum biogenesis</keyword>
<keyword id="KW-0067">ATP-binding</keyword>
<keyword id="KW-0963">Cytoplasm</keyword>
<keyword id="KW-0460">Magnesium</keyword>
<keyword id="KW-0479">Metal-binding</keyword>
<keyword id="KW-0547">Nucleotide-binding</keyword>
<keyword id="KW-1185">Reference proteome</keyword>
<proteinExistence type="evidence at protein level"/>
<dbReference type="EMBL" id="CP000077">
    <property type="protein sequence ID" value="AAY80521.1"/>
    <property type="molecule type" value="Genomic_DNA"/>
</dbReference>
<dbReference type="PDB" id="4YDS">
    <property type="method" value="X-ray"/>
    <property type="resolution" value="2.30 A"/>
    <property type="chains" value="A=1-228"/>
</dbReference>
<dbReference type="PDBsum" id="4YDS"/>
<dbReference type="SMR" id="Q4J9K9"/>
<dbReference type="STRING" id="330779.Saci_1174"/>
<dbReference type="KEGG" id="sai:Saci_1174"/>
<dbReference type="PATRIC" id="fig|330779.12.peg.1138"/>
<dbReference type="eggNOG" id="arCOG04148">
    <property type="taxonomic scope" value="Archaea"/>
</dbReference>
<dbReference type="HOGENOM" id="CLU_094838_1_0_2"/>
<dbReference type="BRENDA" id="3.6.1.3">
    <property type="organism ID" value="6160"/>
</dbReference>
<dbReference type="EvolutionaryTrace" id="Q4J9K9"/>
<dbReference type="Proteomes" id="UP000001018">
    <property type="component" value="Chromosome"/>
</dbReference>
<dbReference type="GO" id="GO:0097589">
    <property type="term" value="C:archaeal-type flagellum"/>
    <property type="evidence" value="ECO:0007669"/>
    <property type="project" value="UniProtKB-SubCell"/>
</dbReference>
<dbReference type="GO" id="GO:0005737">
    <property type="term" value="C:cytoplasm"/>
    <property type="evidence" value="ECO:0007669"/>
    <property type="project" value="UniProtKB-SubCell"/>
</dbReference>
<dbReference type="GO" id="GO:0005524">
    <property type="term" value="F:ATP binding"/>
    <property type="evidence" value="ECO:0007669"/>
    <property type="project" value="UniProtKB-KW"/>
</dbReference>
<dbReference type="GO" id="GO:0046872">
    <property type="term" value="F:metal ion binding"/>
    <property type="evidence" value="ECO:0007669"/>
    <property type="project" value="UniProtKB-KW"/>
</dbReference>
<dbReference type="Gene3D" id="3.40.50.300">
    <property type="entry name" value="P-loop containing nucleotide triphosphate hydrolases"/>
    <property type="match status" value="1"/>
</dbReference>
<dbReference type="InterPro" id="IPR014774">
    <property type="entry name" value="KaiC-like_dom"/>
</dbReference>
<dbReference type="InterPro" id="IPR027417">
    <property type="entry name" value="P-loop_NTPase"/>
</dbReference>
<dbReference type="NCBIfam" id="NF004723">
    <property type="entry name" value="PRK06067.1"/>
    <property type="match status" value="1"/>
</dbReference>
<dbReference type="PANTHER" id="PTHR43637:SF3">
    <property type="entry name" value="FLAGELLA-RELATED PROTEIN H-RELATED"/>
    <property type="match status" value="1"/>
</dbReference>
<dbReference type="PANTHER" id="PTHR43637">
    <property type="entry name" value="UPF0273 PROTEIN TM_0370"/>
    <property type="match status" value="1"/>
</dbReference>
<dbReference type="Pfam" id="PF06745">
    <property type="entry name" value="ATPase"/>
    <property type="match status" value="1"/>
</dbReference>
<dbReference type="SUPFAM" id="SSF52540">
    <property type="entry name" value="P-loop containing nucleoside triphosphate hydrolases"/>
    <property type="match status" value="1"/>
</dbReference>
<accession>Q4J9K9</accession>
<protein>
    <recommendedName>
        <fullName evidence="6">Archaeal flagellar ATP-binding protein FlaH</fullName>
    </recommendedName>
</protein>
<evidence type="ECO:0000269" key="1">
    <source>
    </source>
</evidence>
<evidence type="ECO:0000269" key="2">
    <source>
    </source>
</evidence>
<evidence type="ECO:0000269" key="3">
    <source>
    </source>
</evidence>
<evidence type="ECO:0000269" key="4">
    <source>
    </source>
</evidence>
<evidence type="ECO:0000303" key="5">
    <source>
    </source>
</evidence>
<evidence type="ECO:0000305" key="6"/>
<evidence type="ECO:0000305" key="7">
    <source>
    </source>
</evidence>
<evidence type="ECO:0000312" key="8">
    <source>
        <dbReference type="EMBL" id="AAY80521.1"/>
    </source>
</evidence>
<evidence type="ECO:0007744" key="9">
    <source>
        <dbReference type="PDB" id="4YDS"/>
    </source>
</evidence>
<evidence type="ECO:0007829" key="10">
    <source>
        <dbReference type="PDB" id="4YDS"/>
    </source>
</evidence>
<sequence length="228" mass="25342">MIISTGNDDLDRRLGGIPYPASIMIEGDHGTGKSVLSAQFVLGFLLSDKKGYVITTEQTTKDYLIKMKEIKIDLIPYFIRGKLRIAPLNTKKFNWNSSLAEKILDVIVNFIRSKNIDFIVIDSLSILAAFSKEKQLLQFMKDIRVLVNTGKMILFTIHPDTFDEEMKSKITSIVDVYLKLSAATIGGRRVKILERVKTTGGISGSDTISFDVDPALGIKVVPLSLSRA</sequence>